<accession>A4IQ84</accession>
<protein>
    <recommendedName>
        <fullName evidence="1">Indole-3-glycerol phosphate synthase</fullName>
        <shortName evidence="1">IGPS</shortName>
        <ecNumber evidence="1">4.1.1.48</ecNumber>
    </recommendedName>
</protein>
<sequence length="258" mass="28729">MLEQILATKREELDTLTLPEPLPEPKRRPFAAALRRPRRALGLIAEVKKASPSKGIIRPDFDPVAIAKAYERAGADAISVLTDERYFQGHRRYLQEVKEAVNIPVLRKDFIIDRRQVEESARLGADAILLIGEALSPEMLEALYQEAYSIGLECLVEVHAKETLERILARFTPEVVGINNRDLHTFVTTLEATKALASLIPPSSVIVSESGISSYRDVRTIRSYGVQAMLVGESLMRQADVERAVYRLFGEDDGNGSS</sequence>
<name>TRPC_GEOTN</name>
<reference key="1">
    <citation type="journal article" date="2007" name="Proc. Natl. Acad. Sci. U.S.A.">
        <title>Genome and proteome of long-chain alkane degrading Geobacillus thermodenitrificans NG80-2 isolated from a deep-subsurface oil reservoir.</title>
        <authorList>
            <person name="Feng L."/>
            <person name="Wang W."/>
            <person name="Cheng J."/>
            <person name="Ren Y."/>
            <person name="Zhao G."/>
            <person name="Gao C."/>
            <person name="Tang Y."/>
            <person name="Liu X."/>
            <person name="Han W."/>
            <person name="Peng X."/>
            <person name="Liu R."/>
            <person name="Wang L."/>
        </authorList>
    </citation>
    <scope>NUCLEOTIDE SEQUENCE [LARGE SCALE GENOMIC DNA]</scope>
    <source>
        <strain>NG80-2</strain>
    </source>
</reference>
<dbReference type="EC" id="4.1.1.48" evidence="1"/>
<dbReference type="EMBL" id="CP000557">
    <property type="protein sequence ID" value="ABO67488.1"/>
    <property type="molecule type" value="Genomic_DNA"/>
</dbReference>
<dbReference type="RefSeq" id="WP_011887694.1">
    <property type="nucleotide sequence ID" value="NC_009328.1"/>
</dbReference>
<dbReference type="SMR" id="A4IQ84"/>
<dbReference type="KEGG" id="gtn:GTNG_2136"/>
<dbReference type="eggNOG" id="COG0134">
    <property type="taxonomic scope" value="Bacteria"/>
</dbReference>
<dbReference type="HOGENOM" id="CLU_034247_2_0_9"/>
<dbReference type="UniPathway" id="UPA00035">
    <property type="reaction ID" value="UER00043"/>
</dbReference>
<dbReference type="Proteomes" id="UP000001578">
    <property type="component" value="Chromosome"/>
</dbReference>
<dbReference type="GO" id="GO:0004425">
    <property type="term" value="F:indole-3-glycerol-phosphate synthase activity"/>
    <property type="evidence" value="ECO:0007669"/>
    <property type="project" value="UniProtKB-UniRule"/>
</dbReference>
<dbReference type="GO" id="GO:0004640">
    <property type="term" value="F:phosphoribosylanthranilate isomerase activity"/>
    <property type="evidence" value="ECO:0007669"/>
    <property type="project" value="TreeGrafter"/>
</dbReference>
<dbReference type="GO" id="GO:0000162">
    <property type="term" value="P:L-tryptophan biosynthetic process"/>
    <property type="evidence" value="ECO:0007669"/>
    <property type="project" value="UniProtKB-UniRule"/>
</dbReference>
<dbReference type="CDD" id="cd00331">
    <property type="entry name" value="IGPS"/>
    <property type="match status" value="1"/>
</dbReference>
<dbReference type="FunFam" id="3.20.20.70:FF:000024">
    <property type="entry name" value="Indole-3-glycerol phosphate synthase"/>
    <property type="match status" value="1"/>
</dbReference>
<dbReference type="Gene3D" id="3.20.20.70">
    <property type="entry name" value="Aldolase class I"/>
    <property type="match status" value="1"/>
</dbReference>
<dbReference type="HAMAP" id="MF_00134_B">
    <property type="entry name" value="IGPS_B"/>
    <property type="match status" value="1"/>
</dbReference>
<dbReference type="InterPro" id="IPR013785">
    <property type="entry name" value="Aldolase_TIM"/>
</dbReference>
<dbReference type="InterPro" id="IPR045186">
    <property type="entry name" value="Indole-3-glycerol_P_synth"/>
</dbReference>
<dbReference type="InterPro" id="IPR013798">
    <property type="entry name" value="Indole-3-glycerol_P_synth_dom"/>
</dbReference>
<dbReference type="InterPro" id="IPR001468">
    <property type="entry name" value="Indole-3-GlycerolPSynthase_CS"/>
</dbReference>
<dbReference type="InterPro" id="IPR011060">
    <property type="entry name" value="RibuloseP-bd_barrel"/>
</dbReference>
<dbReference type="NCBIfam" id="NF001375">
    <property type="entry name" value="PRK00278.2-2"/>
    <property type="match status" value="1"/>
</dbReference>
<dbReference type="NCBIfam" id="NF001377">
    <property type="entry name" value="PRK00278.2-4"/>
    <property type="match status" value="1"/>
</dbReference>
<dbReference type="PANTHER" id="PTHR22854:SF2">
    <property type="entry name" value="INDOLE-3-GLYCEROL-PHOSPHATE SYNTHASE"/>
    <property type="match status" value="1"/>
</dbReference>
<dbReference type="PANTHER" id="PTHR22854">
    <property type="entry name" value="TRYPTOPHAN BIOSYNTHESIS PROTEIN"/>
    <property type="match status" value="1"/>
</dbReference>
<dbReference type="Pfam" id="PF00218">
    <property type="entry name" value="IGPS"/>
    <property type="match status" value="1"/>
</dbReference>
<dbReference type="SUPFAM" id="SSF51366">
    <property type="entry name" value="Ribulose-phoshate binding barrel"/>
    <property type="match status" value="1"/>
</dbReference>
<dbReference type="PROSITE" id="PS00614">
    <property type="entry name" value="IGPS"/>
    <property type="match status" value="1"/>
</dbReference>
<gene>
    <name evidence="1" type="primary">trpC</name>
    <name type="ordered locus">GTNG_2136</name>
</gene>
<organism>
    <name type="scientific">Geobacillus thermodenitrificans (strain NG80-2)</name>
    <dbReference type="NCBI Taxonomy" id="420246"/>
    <lineage>
        <taxon>Bacteria</taxon>
        <taxon>Bacillati</taxon>
        <taxon>Bacillota</taxon>
        <taxon>Bacilli</taxon>
        <taxon>Bacillales</taxon>
        <taxon>Anoxybacillaceae</taxon>
        <taxon>Geobacillus</taxon>
    </lineage>
</organism>
<evidence type="ECO:0000255" key="1">
    <source>
        <dbReference type="HAMAP-Rule" id="MF_00134"/>
    </source>
</evidence>
<keyword id="KW-0028">Amino-acid biosynthesis</keyword>
<keyword id="KW-0057">Aromatic amino acid biosynthesis</keyword>
<keyword id="KW-0210">Decarboxylase</keyword>
<keyword id="KW-0456">Lyase</keyword>
<keyword id="KW-0822">Tryptophan biosynthesis</keyword>
<proteinExistence type="inferred from homology"/>
<feature type="chain" id="PRO_1000018481" description="Indole-3-glycerol phosphate synthase">
    <location>
        <begin position="1"/>
        <end position="258"/>
    </location>
</feature>
<comment type="catalytic activity">
    <reaction evidence="1">
        <text>1-(2-carboxyphenylamino)-1-deoxy-D-ribulose 5-phosphate + H(+) = (1S,2R)-1-C-(indol-3-yl)glycerol 3-phosphate + CO2 + H2O</text>
        <dbReference type="Rhea" id="RHEA:23476"/>
        <dbReference type="ChEBI" id="CHEBI:15377"/>
        <dbReference type="ChEBI" id="CHEBI:15378"/>
        <dbReference type="ChEBI" id="CHEBI:16526"/>
        <dbReference type="ChEBI" id="CHEBI:58613"/>
        <dbReference type="ChEBI" id="CHEBI:58866"/>
        <dbReference type="EC" id="4.1.1.48"/>
    </reaction>
</comment>
<comment type="pathway">
    <text evidence="1">Amino-acid biosynthesis; L-tryptophan biosynthesis; L-tryptophan from chorismate: step 4/5.</text>
</comment>
<comment type="similarity">
    <text evidence="1">Belongs to the TrpC family.</text>
</comment>